<evidence type="ECO:0000255" key="1">
    <source>
        <dbReference type="HAMAP-Rule" id="MF_01309"/>
    </source>
</evidence>
<evidence type="ECO:0000305" key="2"/>
<comment type="function">
    <text evidence="1">Binds the lower part of the 30S subunit head. Binds mRNA in the 70S ribosome, positioning it for translation.</text>
</comment>
<comment type="subunit">
    <text evidence="1">Part of the 30S ribosomal subunit. Forms a tight complex with proteins S10 and S14.</text>
</comment>
<comment type="similarity">
    <text evidence="1">Belongs to the universal ribosomal protein uS3 family.</text>
</comment>
<keyword id="KW-0687">Ribonucleoprotein</keyword>
<keyword id="KW-0689">Ribosomal protein</keyword>
<keyword id="KW-0694">RNA-binding</keyword>
<keyword id="KW-0699">rRNA-binding</keyword>
<proteinExistence type="inferred from homology"/>
<sequence>MGQKVNPTGIRLGITKPFASTWFASNKDFASNLDGDHKVREFLKEKLKRASLSKVVIERPAKSIRVTIHTARPGVVIGKKGEDVEKLRLAVSKIAGVPAQINIAEVRKPEMDAQLVADSIASQLERRVMFRRAMKRAVQNAMRLGAKGIKVQVSGRLGGADIARAEWYREGRVPLHTLRADIDYAIARGNTTYGVIGIKVWIFKGEIIGNMPLQAEVPAAKPKRKTNRKPK</sequence>
<name>RS3_COLP3</name>
<organism>
    <name type="scientific">Colwellia psychrerythraea (strain 34H / ATCC BAA-681)</name>
    <name type="common">Vibrio psychroerythus</name>
    <dbReference type="NCBI Taxonomy" id="167879"/>
    <lineage>
        <taxon>Bacteria</taxon>
        <taxon>Pseudomonadati</taxon>
        <taxon>Pseudomonadota</taxon>
        <taxon>Gammaproteobacteria</taxon>
        <taxon>Alteromonadales</taxon>
        <taxon>Colwelliaceae</taxon>
        <taxon>Colwellia</taxon>
    </lineage>
</organism>
<accession>Q487Z9</accession>
<feature type="chain" id="PRO_0000230691" description="Small ribosomal subunit protein uS3">
    <location>
        <begin position="1"/>
        <end position="231"/>
    </location>
</feature>
<feature type="domain" description="KH type-2" evidence="1">
    <location>
        <begin position="39"/>
        <end position="107"/>
    </location>
</feature>
<reference key="1">
    <citation type="journal article" date="2005" name="Proc. Natl. Acad. Sci. U.S.A.">
        <title>The psychrophilic lifestyle as revealed by the genome sequence of Colwellia psychrerythraea 34H through genomic and proteomic analyses.</title>
        <authorList>
            <person name="Methe B.A."/>
            <person name="Nelson K.E."/>
            <person name="Deming J.W."/>
            <person name="Momen B."/>
            <person name="Melamud E."/>
            <person name="Zhang X."/>
            <person name="Moult J."/>
            <person name="Madupu R."/>
            <person name="Nelson W.C."/>
            <person name="Dodson R.J."/>
            <person name="Brinkac L.M."/>
            <person name="Daugherty S.C."/>
            <person name="Durkin A.S."/>
            <person name="DeBoy R.T."/>
            <person name="Kolonay J.F."/>
            <person name="Sullivan S.A."/>
            <person name="Zhou L."/>
            <person name="Davidsen T.M."/>
            <person name="Wu M."/>
            <person name="Huston A.L."/>
            <person name="Lewis M."/>
            <person name="Weaver B."/>
            <person name="Weidman J.F."/>
            <person name="Khouri H."/>
            <person name="Utterback T.R."/>
            <person name="Feldblyum T.V."/>
            <person name="Fraser C.M."/>
        </authorList>
    </citation>
    <scope>NUCLEOTIDE SEQUENCE [LARGE SCALE GENOMIC DNA]</scope>
    <source>
        <strain>34H / ATCC BAA-681</strain>
    </source>
</reference>
<gene>
    <name evidence="1" type="primary">rpsC</name>
    <name type="ordered locus">CPS_0867</name>
</gene>
<protein>
    <recommendedName>
        <fullName evidence="1">Small ribosomal subunit protein uS3</fullName>
    </recommendedName>
    <alternativeName>
        <fullName evidence="2">30S ribosomal protein S3</fullName>
    </alternativeName>
</protein>
<dbReference type="EMBL" id="CP000083">
    <property type="protein sequence ID" value="AAZ28435.1"/>
    <property type="molecule type" value="Genomic_DNA"/>
</dbReference>
<dbReference type="RefSeq" id="WP_011041716.1">
    <property type="nucleotide sequence ID" value="NC_003910.7"/>
</dbReference>
<dbReference type="SMR" id="Q487Z9"/>
<dbReference type="STRING" id="167879.CPS_0867"/>
<dbReference type="KEGG" id="cps:CPS_0867"/>
<dbReference type="eggNOG" id="COG0092">
    <property type="taxonomic scope" value="Bacteria"/>
</dbReference>
<dbReference type="HOGENOM" id="CLU_058591_0_2_6"/>
<dbReference type="Proteomes" id="UP000000547">
    <property type="component" value="Chromosome"/>
</dbReference>
<dbReference type="GO" id="GO:0022627">
    <property type="term" value="C:cytosolic small ribosomal subunit"/>
    <property type="evidence" value="ECO:0007669"/>
    <property type="project" value="TreeGrafter"/>
</dbReference>
<dbReference type="GO" id="GO:0003729">
    <property type="term" value="F:mRNA binding"/>
    <property type="evidence" value="ECO:0007669"/>
    <property type="project" value="UniProtKB-UniRule"/>
</dbReference>
<dbReference type="GO" id="GO:0019843">
    <property type="term" value="F:rRNA binding"/>
    <property type="evidence" value="ECO:0007669"/>
    <property type="project" value="UniProtKB-UniRule"/>
</dbReference>
<dbReference type="GO" id="GO:0003735">
    <property type="term" value="F:structural constituent of ribosome"/>
    <property type="evidence" value="ECO:0007669"/>
    <property type="project" value="InterPro"/>
</dbReference>
<dbReference type="GO" id="GO:0006412">
    <property type="term" value="P:translation"/>
    <property type="evidence" value="ECO:0007669"/>
    <property type="project" value="UniProtKB-UniRule"/>
</dbReference>
<dbReference type="CDD" id="cd02412">
    <property type="entry name" value="KH-II_30S_S3"/>
    <property type="match status" value="1"/>
</dbReference>
<dbReference type="FunFam" id="3.30.1140.32:FF:000001">
    <property type="entry name" value="30S ribosomal protein S3"/>
    <property type="match status" value="1"/>
</dbReference>
<dbReference type="FunFam" id="3.30.300.20:FF:000001">
    <property type="entry name" value="30S ribosomal protein S3"/>
    <property type="match status" value="1"/>
</dbReference>
<dbReference type="Gene3D" id="3.30.300.20">
    <property type="match status" value="1"/>
</dbReference>
<dbReference type="Gene3D" id="3.30.1140.32">
    <property type="entry name" value="Ribosomal protein S3, C-terminal domain"/>
    <property type="match status" value="1"/>
</dbReference>
<dbReference type="HAMAP" id="MF_01309_B">
    <property type="entry name" value="Ribosomal_uS3_B"/>
    <property type="match status" value="1"/>
</dbReference>
<dbReference type="InterPro" id="IPR004087">
    <property type="entry name" value="KH_dom"/>
</dbReference>
<dbReference type="InterPro" id="IPR015946">
    <property type="entry name" value="KH_dom-like_a/b"/>
</dbReference>
<dbReference type="InterPro" id="IPR004044">
    <property type="entry name" value="KH_dom_type_2"/>
</dbReference>
<dbReference type="InterPro" id="IPR009019">
    <property type="entry name" value="KH_sf_prok-type"/>
</dbReference>
<dbReference type="InterPro" id="IPR036419">
    <property type="entry name" value="Ribosomal_S3_C_sf"/>
</dbReference>
<dbReference type="InterPro" id="IPR005704">
    <property type="entry name" value="Ribosomal_uS3_bac-typ"/>
</dbReference>
<dbReference type="InterPro" id="IPR001351">
    <property type="entry name" value="Ribosomal_uS3_C"/>
</dbReference>
<dbReference type="InterPro" id="IPR018280">
    <property type="entry name" value="Ribosomal_uS3_CS"/>
</dbReference>
<dbReference type="NCBIfam" id="TIGR01009">
    <property type="entry name" value="rpsC_bact"/>
    <property type="match status" value="1"/>
</dbReference>
<dbReference type="PANTHER" id="PTHR11760">
    <property type="entry name" value="30S/40S RIBOSOMAL PROTEIN S3"/>
    <property type="match status" value="1"/>
</dbReference>
<dbReference type="PANTHER" id="PTHR11760:SF19">
    <property type="entry name" value="SMALL RIBOSOMAL SUBUNIT PROTEIN US3C"/>
    <property type="match status" value="1"/>
</dbReference>
<dbReference type="Pfam" id="PF07650">
    <property type="entry name" value="KH_2"/>
    <property type="match status" value="1"/>
</dbReference>
<dbReference type="Pfam" id="PF00189">
    <property type="entry name" value="Ribosomal_S3_C"/>
    <property type="match status" value="1"/>
</dbReference>
<dbReference type="SMART" id="SM00322">
    <property type="entry name" value="KH"/>
    <property type="match status" value="1"/>
</dbReference>
<dbReference type="SUPFAM" id="SSF54814">
    <property type="entry name" value="Prokaryotic type KH domain (KH-domain type II)"/>
    <property type="match status" value="1"/>
</dbReference>
<dbReference type="SUPFAM" id="SSF54821">
    <property type="entry name" value="Ribosomal protein S3 C-terminal domain"/>
    <property type="match status" value="1"/>
</dbReference>
<dbReference type="PROSITE" id="PS50823">
    <property type="entry name" value="KH_TYPE_2"/>
    <property type="match status" value="1"/>
</dbReference>
<dbReference type="PROSITE" id="PS00548">
    <property type="entry name" value="RIBOSOMAL_S3"/>
    <property type="match status" value="1"/>
</dbReference>